<reference evidence="4" key="1">
    <citation type="journal article" date="2011" name="Toxicon">
        <title>Biochemical and molecular characterization of the venom from the Cuban scorpion Rhopalurus junceus.</title>
        <authorList>
            <person name="Garcia-Gomez B.I."/>
            <person name="Coronas F.I."/>
            <person name="Restano-Cassulini R."/>
            <person name="Rodriguez R.R."/>
            <person name="Possani L.D."/>
        </authorList>
    </citation>
    <scope>PROTEIN SEQUENCE</scope>
    <scope>FUNCTION</scope>
    <scope>SUBCELLULAR LOCATION</scope>
    <source>
        <tissue evidence="2">Venom</tissue>
    </source>
</reference>
<evidence type="ECO:0000256" key="1">
    <source>
        <dbReference type="SAM" id="MobiDB-lite"/>
    </source>
</evidence>
<evidence type="ECO:0000269" key="2">
    <source>
    </source>
</evidence>
<evidence type="ECO:0000303" key="3">
    <source>
    </source>
</evidence>
<evidence type="ECO:0000305" key="4"/>
<evidence type="ECO:0000305" key="5">
    <source>
    </source>
</evidence>
<feature type="chain" id="PRO_0000413634" description="Venom protein">
    <location>
        <begin position="1"/>
        <end position="28" status="greater than"/>
    </location>
</feature>
<feature type="region of interest" description="Disordered" evidence="1">
    <location>
        <begin position="1"/>
        <end position="28"/>
    </location>
</feature>
<feature type="compositionally biased region" description="Polar residues" evidence="1">
    <location>
        <begin position="19"/>
        <end position="28"/>
    </location>
</feature>
<feature type="non-terminal residue" evidence="3">
    <location>
        <position position="28"/>
    </location>
</feature>
<sequence>KEGYPDGQNGKKIPCAINDNISKTXEQA</sequence>
<name>VP_RHOJU</name>
<accession>P86991</accession>
<protein>
    <recommendedName>
        <fullName evidence="5">Venom protein</fullName>
    </recommendedName>
</protein>
<organism>
    <name type="scientific">Rhopalurus junceus</name>
    <name type="common">Caribbean blue scorpion</name>
    <dbReference type="NCBI Taxonomy" id="419285"/>
    <lineage>
        <taxon>Eukaryota</taxon>
        <taxon>Metazoa</taxon>
        <taxon>Ecdysozoa</taxon>
        <taxon>Arthropoda</taxon>
        <taxon>Chelicerata</taxon>
        <taxon>Arachnida</taxon>
        <taxon>Scorpiones</taxon>
        <taxon>Buthida</taxon>
        <taxon>Buthoidea</taxon>
        <taxon>Buthidae</taxon>
        <taxon>Rhopalurus</taxon>
    </lineage>
</organism>
<proteinExistence type="evidence at protein level"/>
<comment type="function">
    <text evidence="2">Causes symptoms of mild intoxication and transient paralysis in insects (A.domestica).</text>
</comment>
<comment type="subcellular location">
    <subcellularLocation>
        <location evidence="2">Secreted</location>
    </subcellularLocation>
</comment>
<comment type="tissue specificity">
    <text evidence="5">Expressed by the venom gland.</text>
</comment>
<keyword id="KW-0903">Direct protein sequencing</keyword>
<keyword id="KW-0964">Secreted</keyword>
<keyword id="KW-0800">Toxin</keyword>
<dbReference type="GO" id="GO:0005576">
    <property type="term" value="C:extracellular region"/>
    <property type="evidence" value="ECO:0007669"/>
    <property type="project" value="UniProtKB-SubCell"/>
</dbReference>
<dbReference type="GO" id="GO:0090729">
    <property type="term" value="F:toxin activity"/>
    <property type="evidence" value="ECO:0007669"/>
    <property type="project" value="UniProtKB-KW"/>
</dbReference>